<dbReference type="EMBL" id="AE017197">
    <property type="protein sequence ID" value="AAU03543.1"/>
    <property type="molecule type" value="Genomic_DNA"/>
</dbReference>
<dbReference type="RefSeq" id="WP_011190530.1">
    <property type="nucleotide sequence ID" value="NC_006142.1"/>
</dbReference>
<dbReference type="KEGG" id="rty:RT0057"/>
<dbReference type="eggNOG" id="COG3047">
    <property type="taxonomic scope" value="Bacteria"/>
</dbReference>
<dbReference type="HOGENOM" id="CLU_1141892_0_0_5"/>
<dbReference type="Proteomes" id="UP000000604">
    <property type="component" value="Chromosome"/>
</dbReference>
<dbReference type="GO" id="GO:0009279">
    <property type="term" value="C:cell outer membrane"/>
    <property type="evidence" value="ECO:0007669"/>
    <property type="project" value="UniProtKB-SubCell"/>
</dbReference>
<dbReference type="GO" id="GO:0055085">
    <property type="term" value="P:transmembrane transport"/>
    <property type="evidence" value="ECO:0007669"/>
    <property type="project" value="TreeGrafter"/>
</dbReference>
<dbReference type="Gene3D" id="2.40.160.20">
    <property type="match status" value="1"/>
</dbReference>
<dbReference type="InterPro" id="IPR011250">
    <property type="entry name" value="OMP/PagP_b-brl"/>
</dbReference>
<dbReference type="InterPro" id="IPR005618">
    <property type="entry name" value="OMPW"/>
</dbReference>
<dbReference type="PANTHER" id="PTHR36920">
    <property type="match status" value="1"/>
</dbReference>
<dbReference type="PANTHER" id="PTHR36920:SF1">
    <property type="entry name" value="OUTER MEMBRANE PROTEIN W"/>
    <property type="match status" value="1"/>
</dbReference>
<dbReference type="Pfam" id="PF03922">
    <property type="entry name" value="OmpW"/>
    <property type="match status" value="1"/>
</dbReference>
<dbReference type="SUPFAM" id="SSF56925">
    <property type="entry name" value="OMPA-like"/>
    <property type="match status" value="1"/>
</dbReference>
<gene>
    <name type="ordered locus">RT0057</name>
</gene>
<organism>
    <name type="scientific">Rickettsia typhi (strain ATCC VR-144 / Wilmington)</name>
    <dbReference type="NCBI Taxonomy" id="257363"/>
    <lineage>
        <taxon>Bacteria</taxon>
        <taxon>Pseudomonadati</taxon>
        <taxon>Pseudomonadota</taxon>
        <taxon>Alphaproteobacteria</taxon>
        <taxon>Rickettsiales</taxon>
        <taxon>Rickettsiaceae</taxon>
        <taxon>Rickettsieae</taxon>
        <taxon>Rickettsia</taxon>
        <taxon>typhus group</taxon>
    </lineage>
</organism>
<accession>Q68XU9</accession>
<reference key="1">
    <citation type="journal article" date="2004" name="J. Bacteriol.">
        <title>Complete genome sequence of Rickettsia typhi and comparison with sequences of other Rickettsiae.</title>
        <authorList>
            <person name="McLeod M.P."/>
            <person name="Qin X."/>
            <person name="Karpathy S.E."/>
            <person name="Gioia J."/>
            <person name="Highlander S.K."/>
            <person name="Fox G.E."/>
            <person name="McNeill T.Z."/>
            <person name="Jiang H."/>
            <person name="Muzny D."/>
            <person name="Jacob L.S."/>
            <person name="Hawes A.C."/>
            <person name="Sodergren E."/>
            <person name="Gill R."/>
            <person name="Hume J."/>
            <person name="Morgan M."/>
            <person name="Fan G."/>
            <person name="Amin A.G."/>
            <person name="Gibbs R.A."/>
            <person name="Hong C."/>
            <person name="Yu X.-J."/>
            <person name="Walker D.H."/>
            <person name="Weinstock G.M."/>
        </authorList>
    </citation>
    <scope>NUCLEOTIDE SEQUENCE [LARGE SCALE GENOMIC DNA]</scope>
    <source>
        <strain>ATCC VR-144 / Wilmington</strain>
    </source>
</reference>
<protein>
    <recommendedName>
        <fullName>Putative outer membrane protein RT0057</fullName>
    </recommendedName>
</protein>
<comment type="subcellular location">
    <subcellularLocation>
        <location evidence="1">Cell outer membrane</location>
    </subcellularLocation>
</comment>
<comment type="similarity">
    <text evidence="3">Belongs to the OmpW/AlkL family.</text>
</comment>
<proteinExistence type="inferred from homology"/>
<feature type="signal peptide" evidence="2">
    <location>
        <begin position="1"/>
        <end position="20"/>
    </location>
</feature>
<feature type="chain" id="PRO_0000262724" description="Putative outer membrane protein RT0057">
    <location>
        <begin position="21"/>
        <end position="240"/>
    </location>
</feature>
<sequence>MLKKLCVILFISSITINSHAKNMYDNVDTATSYDSTYYENEGSLVFKMRLGGIFASAKQKGLPTHSSVQPVSVGEIAKNGYGGDASTTIFFNNYLAAELSLGFNVLRTKYTSLAAVAHNYGINNVKLGKHKPIYMIPATLTGQFHIAPYGGIRPYIGIGYHGSYMLTQATGLKIRNGYNAVGQIGVDFYAKDDTLINIDVRQFFLKPKLEYKSNLVGNKKVTSKVKLNPLIVSIGIGFTF</sequence>
<name>Y057_RICTY</name>
<keyword id="KW-0998">Cell outer membrane</keyword>
<keyword id="KW-0472">Membrane</keyword>
<keyword id="KW-0732">Signal</keyword>
<keyword id="KW-0812">Transmembrane</keyword>
<keyword id="KW-1134">Transmembrane beta strand</keyword>
<evidence type="ECO:0000250" key="1"/>
<evidence type="ECO:0000255" key="2"/>
<evidence type="ECO:0000305" key="3"/>